<evidence type="ECO:0000250" key="1">
    <source>
        <dbReference type="UniProtKB" id="P53867"/>
    </source>
</evidence>
<evidence type="ECO:0000250" key="2">
    <source>
        <dbReference type="UniProtKB" id="Q9Y4P1"/>
    </source>
</evidence>
<evidence type="ECO:0000305" key="3"/>
<name>ATG4_ASPNC</name>
<comment type="function">
    <text evidence="1">Cysteine protease that plays a key role in cytoplasm to vacuole transport (Cvt) and autophagy by mediating both proteolytic activation and delipidation of ATG8. Required for selective autophagic degradation of the nucleus (nucleophagy) as well as for mitophagy which contributes to regulate mitochondrial quantity and quality by eliminating the mitochondria to a basal level to fulfill cellular energy requirements and preventing excess ROS production. The protease activity is required for proteolytic activation of ATG8: cleaves the C-terminal amino acid of ATG8 to reveal a C-terminal glycine. ATG8 ubiquitin-like activity requires the exposure of the glycine at the C-terminus for its conjugation to phosphatidylethanolamine (PE) and its insertion to membranes, which is necessary for autophagy. The ATG8-PE conjugate mediates tethering between adjacent membranes and stimulates membrane hemifusion, leading to expansion of the autophagosomal membrane during autophagy. In addition to the protease activity, also catalyzes deconjugation of PE-conjugated forms of ATG8 during macroautophagy: ATG8 delipidation is required to release the protein from membranes, which facilitates multiple events during macroautophagy, and especially for efficient autophagosome biogenesis, the assembly of ATG9-containing tubulovesicular clusters into phagophores/autophagosomes, and for the disassembly of PAS-associated ATG components. ATG8 delipidation by ATG4 also recycles ATG8-PE generated on inappropriate membranes to maintain a reservoir of unlipidated ATG8 that is required for autophagosome formation at the PAS.</text>
</comment>
<comment type="catalytic activity">
    <reaction evidence="1">
        <text>[protein]-C-terminal L-amino acid-glycyl-phosphatidylethanolamide + H2O = [protein]-C-terminal L-amino acid-glycine + a 1,2-diacyl-sn-glycero-3-phosphoethanolamine</text>
        <dbReference type="Rhea" id="RHEA:67548"/>
        <dbReference type="Rhea" id="RHEA-COMP:17323"/>
        <dbReference type="Rhea" id="RHEA-COMP:17324"/>
        <dbReference type="ChEBI" id="CHEBI:15377"/>
        <dbReference type="ChEBI" id="CHEBI:64612"/>
        <dbReference type="ChEBI" id="CHEBI:172940"/>
        <dbReference type="ChEBI" id="CHEBI:172941"/>
    </reaction>
    <physiologicalReaction direction="left-to-right" evidence="1">
        <dbReference type="Rhea" id="RHEA:67549"/>
    </physiologicalReaction>
</comment>
<comment type="subcellular location">
    <subcellularLocation>
        <location evidence="1">Cytoplasm</location>
    </subcellularLocation>
    <subcellularLocation>
        <location evidence="1">Nucleus</location>
    </subcellularLocation>
    <subcellularLocation>
        <location evidence="1">Preautophagosomal structure</location>
    </subcellularLocation>
</comment>
<comment type="similarity">
    <text evidence="3">Belongs to the peptidase C54 family.</text>
</comment>
<gene>
    <name type="primary">atg4</name>
    <name type="ORF">An11g11320</name>
</gene>
<dbReference type="EC" id="3.4.22.-"/>
<dbReference type="EMBL" id="AM270257">
    <property type="protein sequence ID" value="CAK40930.1"/>
    <property type="molecule type" value="Genomic_DNA"/>
</dbReference>
<dbReference type="RefSeq" id="XP_001395089.1">
    <property type="nucleotide sequence ID" value="XM_001395052.2"/>
</dbReference>
<dbReference type="SMR" id="A2QY50"/>
<dbReference type="MEROPS" id="C54.001"/>
<dbReference type="EnsemblFungi" id="CAK40930">
    <property type="protein sequence ID" value="CAK40930"/>
    <property type="gene ID" value="An11g11320"/>
</dbReference>
<dbReference type="GeneID" id="4985349"/>
<dbReference type="KEGG" id="ang:An11g11320"/>
<dbReference type="VEuPathDB" id="FungiDB:An11g11320"/>
<dbReference type="HOGENOM" id="CLU_021259_5_1_1"/>
<dbReference type="Proteomes" id="UP000006706">
    <property type="component" value="Chromosome 7R"/>
</dbReference>
<dbReference type="GO" id="GO:0005829">
    <property type="term" value="C:cytosol"/>
    <property type="evidence" value="ECO:0007669"/>
    <property type="project" value="EnsemblFungi"/>
</dbReference>
<dbReference type="GO" id="GO:0005739">
    <property type="term" value="C:mitochondrion"/>
    <property type="evidence" value="ECO:0007669"/>
    <property type="project" value="EnsemblFungi"/>
</dbReference>
<dbReference type="GO" id="GO:0005634">
    <property type="term" value="C:nucleus"/>
    <property type="evidence" value="ECO:0007669"/>
    <property type="project" value="UniProtKB-SubCell"/>
</dbReference>
<dbReference type="GO" id="GO:0000407">
    <property type="term" value="C:phagophore assembly site"/>
    <property type="evidence" value="ECO:0007669"/>
    <property type="project" value="UniProtKB-SubCell"/>
</dbReference>
<dbReference type="GO" id="GO:0004197">
    <property type="term" value="F:cysteine-type endopeptidase activity"/>
    <property type="evidence" value="ECO:0007669"/>
    <property type="project" value="TreeGrafter"/>
</dbReference>
<dbReference type="GO" id="GO:0019786">
    <property type="term" value="F:protein-phosphatidylethanolamide deconjugating activity"/>
    <property type="evidence" value="ECO:0007669"/>
    <property type="project" value="EnsemblFungi"/>
</dbReference>
<dbReference type="GO" id="GO:0035973">
    <property type="term" value="P:aggrephagy"/>
    <property type="evidence" value="ECO:0007669"/>
    <property type="project" value="TreeGrafter"/>
</dbReference>
<dbReference type="GO" id="GO:0000045">
    <property type="term" value="P:autophagosome assembly"/>
    <property type="evidence" value="ECO:0007669"/>
    <property type="project" value="EnsemblFungi"/>
</dbReference>
<dbReference type="GO" id="GO:0000423">
    <property type="term" value="P:mitophagy"/>
    <property type="evidence" value="ECO:0007669"/>
    <property type="project" value="TreeGrafter"/>
</dbReference>
<dbReference type="GO" id="GO:0034727">
    <property type="term" value="P:piecemeal microautophagy of the nucleus"/>
    <property type="evidence" value="ECO:0007669"/>
    <property type="project" value="EnsemblFungi"/>
</dbReference>
<dbReference type="GO" id="GO:0016485">
    <property type="term" value="P:protein processing"/>
    <property type="evidence" value="ECO:0007669"/>
    <property type="project" value="TreeGrafter"/>
</dbReference>
<dbReference type="GO" id="GO:0006612">
    <property type="term" value="P:protein targeting to membrane"/>
    <property type="evidence" value="ECO:0007669"/>
    <property type="project" value="EnsemblFungi"/>
</dbReference>
<dbReference type="GO" id="GO:0015031">
    <property type="term" value="P:protein transport"/>
    <property type="evidence" value="ECO:0007669"/>
    <property type="project" value="UniProtKB-KW"/>
</dbReference>
<dbReference type="InterPro" id="IPR038765">
    <property type="entry name" value="Papain-like_cys_pep_sf"/>
</dbReference>
<dbReference type="InterPro" id="IPR005078">
    <property type="entry name" value="Peptidase_C54"/>
</dbReference>
<dbReference type="InterPro" id="IPR046792">
    <property type="entry name" value="Peptidase_C54_cat"/>
</dbReference>
<dbReference type="PANTHER" id="PTHR22624:SF49">
    <property type="entry name" value="CYSTEINE PROTEASE"/>
    <property type="match status" value="1"/>
</dbReference>
<dbReference type="PANTHER" id="PTHR22624">
    <property type="entry name" value="CYSTEINE PROTEASE ATG4"/>
    <property type="match status" value="1"/>
</dbReference>
<dbReference type="Pfam" id="PF03416">
    <property type="entry name" value="Peptidase_C54"/>
    <property type="match status" value="1"/>
</dbReference>
<dbReference type="SUPFAM" id="SSF54001">
    <property type="entry name" value="Cysteine proteinases"/>
    <property type="match status" value="1"/>
</dbReference>
<protein>
    <recommendedName>
        <fullName>Probable cysteine protease atg4</fullName>
        <ecNumber>3.4.22.-</ecNumber>
    </recommendedName>
    <alternativeName>
        <fullName>Autophagy-related protein 4</fullName>
    </alternativeName>
</protein>
<reference key="1">
    <citation type="journal article" date="2007" name="Nat. Biotechnol.">
        <title>Genome sequencing and analysis of the versatile cell factory Aspergillus niger CBS 513.88.</title>
        <authorList>
            <person name="Pel H.J."/>
            <person name="de Winde J.H."/>
            <person name="Archer D.B."/>
            <person name="Dyer P.S."/>
            <person name="Hofmann G."/>
            <person name="Schaap P.J."/>
            <person name="Turner G."/>
            <person name="de Vries R.P."/>
            <person name="Albang R."/>
            <person name="Albermann K."/>
            <person name="Andersen M.R."/>
            <person name="Bendtsen J.D."/>
            <person name="Benen J.A.E."/>
            <person name="van den Berg M."/>
            <person name="Breestraat S."/>
            <person name="Caddick M.X."/>
            <person name="Contreras R."/>
            <person name="Cornell M."/>
            <person name="Coutinho P.M."/>
            <person name="Danchin E.G.J."/>
            <person name="Debets A.J.M."/>
            <person name="Dekker P."/>
            <person name="van Dijck P.W.M."/>
            <person name="van Dijk A."/>
            <person name="Dijkhuizen L."/>
            <person name="Driessen A.J.M."/>
            <person name="d'Enfert C."/>
            <person name="Geysens S."/>
            <person name="Goosen C."/>
            <person name="Groot G.S.P."/>
            <person name="de Groot P.W.J."/>
            <person name="Guillemette T."/>
            <person name="Henrissat B."/>
            <person name="Herweijer M."/>
            <person name="van den Hombergh J.P.T.W."/>
            <person name="van den Hondel C.A.M.J.J."/>
            <person name="van der Heijden R.T.J.M."/>
            <person name="van der Kaaij R.M."/>
            <person name="Klis F.M."/>
            <person name="Kools H.J."/>
            <person name="Kubicek C.P."/>
            <person name="van Kuyk P.A."/>
            <person name="Lauber J."/>
            <person name="Lu X."/>
            <person name="van der Maarel M.J.E.C."/>
            <person name="Meulenberg R."/>
            <person name="Menke H."/>
            <person name="Mortimer M.A."/>
            <person name="Nielsen J."/>
            <person name="Oliver S.G."/>
            <person name="Olsthoorn M."/>
            <person name="Pal K."/>
            <person name="van Peij N.N.M.E."/>
            <person name="Ram A.F.J."/>
            <person name="Rinas U."/>
            <person name="Roubos J.A."/>
            <person name="Sagt C.M.J."/>
            <person name="Schmoll M."/>
            <person name="Sun J."/>
            <person name="Ussery D."/>
            <person name="Varga J."/>
            <person name="Vervecken W."/>
            <person name="van de Vondervoort P.J.J."/>
            <person name="Wedler H."/>
            <person name="Woesten H.A.B."/>
            <person name="Zeng A.-P."/>
            <person name="van Ooyen A.J.J."/>
            <person name="Visser J."/>
            <person name="Stam H."/>
        </authorList>
    </citation>
    <scope>NUCLEOTIDE SEQUENCE [LARGE SCALE GENOMIC DNA]</scope>
    <source>
        <strain>ATCC MYA-4892 / CBS 513.88 / FGSC A1513</strain>
    </source>
</reference>
<keyword id="KW-0072">Autophagy</keyword>
<keyword id="KW-0963">Cytoplasm</keyword>
<keyword id="KW-0378">Hydrolase</keyword>
<keyword id="KW-0539">Nucleus</keyword>
<keyword id="KW-0645">Protease</keyword>
<keyword id="KW-0653">Protein transport</keyword>
<keyword id="KW-1185">Reference proteome</keyword>
<keyword id="KW-0788">Thiol protease</keyword>
<keyword id="KW-0813">Transport</keyword>
<accession>A2QY50</accession>
<sequence>MNTVDIGRCSKRIVQYLWDPEPRNDEDPNSSIWCLGIEYHPDKDANTRETPDKNNTRENVMGTTNYRKPSEHAWPESFLLDFESRIWMTYRSNFPPIPRVEGDDKSASMTLGVRLRSQLVDTQGFTSDTGWGCMIRSGQSLLANALSMLVLGRDWRRGARFEEESQLLSLFADTPTAPFSVHRFVKHGAESCGKYPGEWFGPSATAKCIEALSSQCGNPTLKVYVSNDTSEVYQDKFMDIARNTSGAFQPTLILLGTRLGIDNITPVYWDGLKAALQFPQSVGIAGGRPSASHYFVGAQGSHLFYLDPHYTRPALPDRQEGELYSKEEVDTYHTRRLRRIHVRDMDPSMLIGFLIRNQEDWADWLKRIEAVKGRPIIHVLKQMNPDHDQEAGALDQVEALDDIE</sequence>
<proteinExistence type="inferred from homology"/>
<organism>
    <name type="scientific">Aspergillus niger (strain ATCC MYA-4892 / CBS 513.88 / FGSC A1513)</name>
    <dbReference type="NCBI Taxonomy" id="425011"/>
    <lineage>
        <taxon>Eukaryota</taxon>
        <taxon>Fungi</taxon>
        <taxon>Dikarya</taxon>
        <taxon>Ascomycota</taxon>
        <taxon>Pezizomycotina</taxon>
        <taxon>Eurotiomycetes</taxon>
        <taxon>Eurotiomycetidae</taxon>
        <taxon>Eurotiales</taxon>
        <taxon>Aspergillaceae</taxon>
        <taxon>Aspergillus</taxon>
        <taxon>Aspergillus subgen. Circumdati</taxon>
    </lineage>
</organism>
<feature type="chain" id="PRO_0000317833" description="Probable cysteine protease atg4">
    <location>
        <begin position="1"/>
        <end position="404"/>
    </location>
</feature>
<feature type="active site" description="Nucleophile" evidence="2">
    <location>
        <position position="133"/>
    </location>
</feature>
<feature type="active site" evidence="2">
    <location>
        <position position="307"/>
    </location>
</feature>
<feature type="active site" evidence="2">
    <location>
        <position position="309"/>
    </location>
</feature>